<protein>
    <recommendedName>
        <fullName evidence="1">Transcription elongation factor GreA</fullName>
    </recommendedName>
    <alternativeName>
        <fullName evidence="1">Transcript cleavage factor GreA</fullName>
    </alternativeName>
</protein>
<name>GREA_BACCN</name>
<gene>
    <name evidence="1" type="primary">greA</name>
    <name type="ordered locus">Bcer98_3092</name>
</gene>
<proteinExistence type="inferred from homology"/>
<accession>A7GT58</accession>
<evidence type="ECO:0000255" key="1">
    <source>
        <dbReference type="HAMAP-Rule" id="MF_00105"/>
    </source>
</evidence>
<feature type="chain" id="PRO_1000075856" description="Transcription elongation factor GreA">
    <location>
        <begin position="1"/>
        <end position="158"/>
    </location>
</feature>
<feature type="coiled-coil region" evidence="1">
    <location>
        <begin position="3"/>
        <end position="75"/>
    </location>
</feature>
<dbReference type="EMBL" id="CP000764">
    <property type="protein sequence ID" value="ABS23316.1"/>
    <property type="molecule type" value="Genomic_DNA"/>
</dbReference>
<dbReference type="RefSeq" id="WP_012095553.1">
    <property type="nucleotide sequence ID" value="NC_009674.1"/>
</dbReference>
<dbReference type="SMR" id="A7GT58"/>
<dbReference type="STRING" id="315749.Bcer98_3092"/>
<dbReference type="GeneID" id="33898339"/>
<dbReference type="KEGG" id="bcy:Bcer98_3092"/>
<dbReference type="eggNOG" id="COG0782">
    <property type="taxonomic scope" value="Bacteria"/>
</dbReference>
<dbReference type="HOGENOM" id="CLU_101379_2_1_9"/>
<dbReference type="OrthoDB" id="9808774at2"/>
<dbReference type="Proteomes" id="UP000002300">
    <property type="component" value="Chromosome"/>
</dbReference>
<dbReference type="GO" id="GO:0003677">
    <property type="term" value="F:DNA binding"/>
    <property type="evidence" value="ECO:0007669"/>
    <property type="project" value="UniProtKB-UniRule"/>
</dbReference>
<dbReference type="GO" id="GO:0070063">
    <property type="term" value="F:RNA polymerase binding"/>
    <property type="evidence" value="ECO:0007669"/>
    <property type="project" value="InterPro"/>
</dbReference>
<dbReference type="GO" id="GO:0006354">
    <property type="term" value="P:DNA-templated transcription elongation"/>
    <property type="evidence" value="ECO:0007669"/>
    <property type="project" value="TreeGrafter"/>
</dbReference>
<dbReference type="GO" id="GO:0032784">
    <property type="term" value="P:regulation of DNA-templated transcription elongation"/>
    <property type="evidence" value="ECO:0007669"/>
    <property type="project" value="UniProtKB-UniRule"/>
</dbReference>
<dbReference type="FunFam" id="1.10.287.180:FF:000001">
    <property type="entry name" value="Transcription elongation factor GreA"/>
    <property type="match status" value="1"/>
</dbReference>
<dbReference type="FunFam" id="3.10.50.30:FF:000001">
    <property type="entry name" value="Transcription elongation factor GreA"/>
    <property type="match status" value="1"/>
</dbReference>
<dbReference type="Gene3D" id="3.10.50.30">
    <property type="entry name" value="Transcription elongation factor, GreA/GreB, C-terminal domain"/>
    <property type="match status" value="1"/>
</dbReference>
<dbReference type="Gene3D" id="1.10.287.180">
    <property type="entry name" value="Transcription elongation factor, GreA/GreB, N-terminal domain"/>
    <property type="match status" value="1"/>
</dbReference>
<dbReference type="HAMAP" id="MF_00105">
    <property type="entry name" value="GreA_GreB"/>
    <property type="match status" value="1"/>
</dbReference>
<dbReference type="InterPro" id="IPR036953">
    <property type="entry name" value="GreA/GreB_C_sf"/>
</dbReference>
<dbReference type="InterPro" id="IPR018151">
    <property type="entry name" value="TF_GreA/GreB_CS"/>
</dbReference>
<dbReference type="InterPro" id="IPR006359">
    <property type="entry name" value="Tscrpt_elong_fac_GreA"/>
</dbReference>
<dbReference type="InterPro" id="IPR028624">
    <property type="entry name" value="Tscrpt_elong_fac_GreA/B"/>
</dbReference>
<dbReference type="InterPro" id="IPR001437">
    <property type="entry name" value="Tscrpt_elong_fac_GreA/B_C"/>
</dbReference>
<dbReference type="InterPro" id="IPR023459">
    <property type="entry name" value="Tscrpt_elong_fac_GreA/B_fam"/>
</dbReference>
<dbReference type="InterPro" id="IPR022691">
    <property type="entry name" value="Tscrpt_elong_fac_GreA/B_N"/>
</dbReference>
<dbReference type="InterPro" id="IPR036805">
    <property type="entry name" value="Tscrpt_elong_fac_GreA/B_N_sf"/>
</dbReference>
<dbReference type="NCBIfam" id="TIGR01462">
    <property type="entry name" value="greA"/>
    <property type="match status" value="1"/>
</dbReference>
<dbReference type="NCBIfam" id="NF001261">
    <property type="entry name" value="PRK00226.1-2"/>
    <property type="match status" value="1"/>
</dbReference>
<dbReference type="NCBIfam" id="NF001263">
    <property type="entry name" value="PRK00226.1-4"/>
    <property type="match status" value="1"/>
</dbReference>
<dbReference type="PANTHER" id="PTHR30437">
    <property type="entry name" value="TRANSCRIPTION ELONGATION FACTOR GREA"/>
    <property type="match status" value="1"/>
</dbReference>
<dbReference type="PANTHER" id="PTHR30437:SF4">
    <property type="entry name" value="TRANSCRIPTION ELONGATION FACTOR GREA"/>
    <property type="match status" value="1"/>
</dbReference>
<dbReference type="Pfam" id="PF01272">
    <property type="entry name" value="GreA_GreB"/>
    <property type="match status" value="1"/>
</dbReference>
<dbReference type="Pfam" id="PF03449">
    <property type="entry name" value="GreA_GreB_N"/>
    <property type="match status" value="1"/>
</dbReference>
<dbReference type="PIRSF" id="PIRSF006092">
    <property type="entry name" value="GreA_GreB"/>
    <property type="match status" value="1"/>
</dbReference>
<dbReference type="SUPFAM" id="SSF54534">
    <property type="entry name" value="FKBP-like"/>
    <property type="match status" value="1"/>
</dbReference>
<dbReference type="SUPFAM" id="SSF46557">
    <property type="entry name" value="GreA transcript cleavage protein, N-terminal domain"/>
    <property type="match status" value="1"/>
</dbReference>
<dbReference type="PROSITE" id="PS00829">
    <property type="entry name" value="GREAB_1"/>
    <property type="match status" value="1"/>
</dbReference>
<dbReference type="PROSITE" id="PS00830">
    <property type="entry name" value="GREAB_2"/>
    <property type="match status" value="1"/>
</dbReference>
<sequence>MATEKTYPMTQEGKEKLENELEQLKTVRRKEVVERIKIARSFGDLSENSEYDAAKDEQAFVEGRITQLENMIRNAVIIEDTGEESTVVTLGKTVTFKELPDGDEEAYTIVGSAEADPFEGRISNDSPIAKSLLGKQIGEKVVIQTPGGEMQVEIISVK</sequence>
<organism>
    <name type="scientific">Bacillus cytotoxicus (strain DSM 22905 / CIP 110041 / 391-98 / NVH 391-98)</name>
    <dbReference type="NCBI Taxonomy" id="315749"/>
    <lineage>
        <taxon>Bacteria</taxon>
        <taxon>Bacillati</taxon>
        <taxon>Bacillota</taxon>
        <taxon>Bacilli</taxon>
        <taxon>Bacillales</taxon>
        <taxon>Bacillaceae</taxon>
        <taxon>Bacillus</taxon>
        <taxon>Bacillus cereus group</taxon>
    </lineage>
</organism>
<reference key="1">
    <citation type="journal article" date="2008" name="Chem. Biol. Interact.">
        <title>Extending the Bacillus cereus group genomics to putative food-borne pathogens of different toxicity.</title>
        <authorList>
            <person name="Lapidus A."/>
            <person name="Goltsman E."/>
            <person name="Auger S."/>
            <person name="Galleron N."/>
            <person name="Segurens B."/>
            <person name="Dossat C."/>
            <person name="Land M.L."/>
            <person name="Broussolle V."/>
            <person name="Brillard J."/>
            <person name="Guinebretiere M.-H."/>
            <person name="Sanchis V."/>
            <person name="Nguen-the C."/>
            <person name="Lereclus D."/>
            <person name="Richardson P."/>
            <person name="Wincker P."/>
            <person name="Weissenbach J."/>
            <person name="Ehrlich S.D."/>
            <person name="Sorokin A."/>
        </authorList>
    </citation>
    <scope>NUCLEOTIDE SEQUENCE [LARGE SCALE GENOMIC DNA]</scope>
    <source>
        <strain>DSM 22905 / CIP 110041 / 391-98 / NVH 391-98</strain>
    </source>
</reference>
<comment type="function">
    <text evidence="1">Necessary for efficient RNA polymerase transcription elongation past template-encoded arresting sites. The arresting sites in DNA have the property of trapping a certain fraction of elongating RNA polymerases that pass through, resulting in locked ternary complexes. Cleavage of the nascent transcript by cleavage factors such as GreA or GreB allows the resumption of elongation from the new 3'terminus. GreA releases sequences of 2 to 3 nucleotides.</text>
</comment>
<comment type="similarity">
    <text evidence="1">Belongs to the GreA/GreB family.</text>
</comment>
<keyword id="KW-0175">Coiled coil</keyword>
<keyword id="KW-0238">DNA-binding</keyword>
<keyword id="KW-0804">Transcription</keyword>
<keyword id="KW-0805">Transcription regulation</keyword>